<accession>Q9ZCT9</accession>
<feature type="chain" id="PRO_0000193399" description="Ubiquinone biosynthesis O-methyltransferase">
    <location>
        <begin position="1"/>
        <end position="252"/>
    </location>
</feature>
<feature type="binding site" evidence="1">
    <location>
        <position position="36"/>
    </location>
    <ligand>
        <name>S-adenosyl-L-methionine</name>
        <dbReference type="ChEBI" id="CHEBI:59789"/>
    </ligand>
</feature>
<feature type="binding site" evidence="1">
    <location>
        <position position="60"/>
    </location>
    <ligand>
        <name>S-adenosyl-L-methionine</name>
        <dbReference type="ChEBI" id="CHEBI:59789"/>
    </ligand>
</feature>
<feature type="binding site" evidence="1">
    <location>
        <position position="81"/>
    </location>
    <ligand>
        <name>S-adenosyl-L-methionine</name>
        <dbReference type="ChEBI" id="CHEBI:59789"/>
    </ligand>
</feature>
<feature type="binding site" evidence="1">
    <location>
        <position position="123"/>
    </location>
    <ligand>
        <name>S-adenosyl-L-methionine</name>
        <dbReference type="ChEBI" id="CHEBI:59789"/>
    </ligand>
</feature>
<evidence type="ECO:0000255" key="1">
    <source>
        <dbReference type="HAMAP-Rule" id="MF_00472"/>
    </source>
</evidence>
<comment type="function">
    <text evidence="1">O-methyltransferase that catalyzes the 2 O-methylation steps in the ubiquinone biosynthetic pathway.</text>
</comment>
<comment type="catalytic activity">
    <reaction evidence="1">
        <text>a 3-demethylubiquinol + S-adenosyl-L-methionine = a ubiquinol + S-adenosyl-L-homocysteine + H(+)</text>
        <dbReference type="Rhea" id="RHEA:44380"/>
        <dbReference type="Rhea" id="RHEA-COMP:9566"/>
        <dbReference type="Rhea" id="RHEA-COMP:10914"/>
        <dbReference type="ChEBI" id="CHEBI:15378"/>
        <dbReference type="ChEBI" id="CHEBI:17976"/>
        <dbReference type="ChEBI" id="CHEBI:57856"/>
        <dbReference type="ChEBI" id="CHEBI:59789"/>
        <dbReference type="ChEBI" id="CHEBI:84422"/>
        <dbReference type="EC" id="2.1.1.64"/>
    </reaction>
</comment>
<comment type="catalytic activity">
    <reaction evidence="1">
        <text>a 3-(all-trans-polyprenyl)benzene-1,2-diol + S-adenosyl-L-methionine = a 2-methoxy-6-(all-trans-polyprenyl)phenol + S-adenosyl-L-homocysteine + H(+)</text>
        <dbReference type="Rhea" id="RHEA:31411"/>
        <dbReference type="Rhea" id="RHEA-COMP:9550"/>
        <dbReference type="Rhea" id="RHEA-COMP:9551"/>
        <dbReference type="ChEBI" id="CHEBI:15378"/>
        <dbReference type="ChEBI" id="CHEBI:57856"/>
        <dbReference type="ChEBI" id="CHEBI:59789"/>
        <dbReference type="ChEBI" id="CHEBI:62729"/>
        <dbReference type="ChEBI" id="CHEBI:62731"/>
        <dbReference type="EC" id="2.1.1.222"/>
    </reaction>
</comment>
<comment type="pathway">
    <text evidence="1">Cofactor biosynthesis; ubiquinone biosynthesis.</text>
</comment>
<comment type="similarity">
    <text evidence="1">Belongs to the methyltransferase superfamily. UbiG/COQ3 family.</text>
</comment>
<organism>
    <name type="scientific">Rickettsia prowazekii (strain Madrid E)</name>
    <dbReference type="NCBI Taxonomy" id="272947"/>
    <lineage>
        <taxon>Bacteria</taxon>
        <taxon>Pseudomonadati</taxon>
        <taxon>Pseudomonadota</taxon>
        <taxon>Alphaproteobacteria</taxon>
        <taxon>Rickettsiales</taxon>
        <taxon>Rickettsiaceae</taxon>
        <taxon>Rickettsieae</taxon>
        <taxon>Rickettsia</taxon>
        <taxon>typhus group</taxon>
    </lineage>
</organism>
<reference key="1">
    <citation type="journal article" date="1998" name="Nature">
        <title>The genome sequence of Rickettsia prowazekii and the origin of mitochondria.</title>
        <authorList>
            <person name="Andersson S.G.E."/>
            <person name="Zomorodipour A."/>
            <person name="Andersson J.O."/>
            <person name="Sicheritz-Ponten T."/>
            <person name="Alsmark U.C.M."/>
            <person name="Podowski R.M."/>
            <person name="Naeslund A.K."/>
            <person name="Eriksson A.-S."/>
            <person name="Winkler H.H."/>
            <person name="Kurland C.G."/>
        </authorList>
    </citation>
    <scope>NUCLEOTIDE SEQUENCE [LARGE SCALE GENOMIC DNA]</scope>
    <source>
        <strain>Madrid E</strain>
    </source>
</reference>
<name>UBIG_RICPR</name>
<keyword id="KW-0489">Methyltransferase</keyword>
<keyword id="KW-1185">Reference proteome</keyword>
<keyword id="KW-0949">S-adenosyl-L-methionine</keyword>
<keyword id="KW-0808">Transferase</keyword>
<keyword id="KW-0831">Ubiquinone biosynthesis</keyword>
<dbReference type="EC" id="2.1.1.222" evidence="1"/>
<dbReference type="EC" id="2.1.1.64" evidence="1"/>
<dbReference type="EMBL" id="AJ235272">
    <property type="protein sequence ID" value="CAA15065.1"/>
    <property type="molecule type" value="Genomic_DNA"/>
</dbReference>
<dbReference type="PIR" id="G71667">
    <property type="entry name" value="G71667"/>
</dbReference>
<dbReference type="RefSeq" id="NP_220989.1">
    <property type="nucleotide sequence ID" value="NC_000963.1"/>
</dbReference>
<dbReference type="RefSeq" id="WP_004596275.1">
    <property type="nucleotide sequence ID" value="NC_000963.1"/>
</dbReference>
<dbReference type="SMR" id="Q9ZCT9"/>
<dbReference type="STRING" id="272947.gene:17555701"/>
<dbReference type="EnsemblBacteria" id="CAA15065">
    <property type="protein sequence ID" value="CAA15065"/>
    <property type="gene ID" value="CAA15065"/>
</dbReference>
<dbReference type="GeneID" id="57569747"/>
<dbReference type="KEGG" id="rpr:RP622"/>
<dbReference type="PATRIC" id="fig|272947.5.peg.642"/>
<dbReference type="eggNOG" id="COG2227">
    <property type="taxonomic scope" value="Bacteria"/>
</dbReference>
<dbReference type="HOGENOM" id="CLU_042432_0_0_5"/>
<dbReference type="OrthoDB" id="9801538at2"/>
<dbReference type="UniPathway" id="UPA00232"/>
<dbReference type="Proteomes" id="UP000002480">
    <property type="component" value="Chromosome"/>
</dbReference>
<dbReference type="GO" id="GO:0102208">
    <property type="term" value="F:2-polyprenyl-6-hydroxyphenol methylase activity"/>
    <property type="evidence" value="ECO:0007669"/>
    <property type="project" value="UniProtKB-EC"/>
</dbReference>
<dbReference type="GO" id="GO:0061542">
    <property type="term" value="F:3-demethylubiquinol 3-O-methyltransferase activity"/>
    <property type="evidence" value="ECO:0007669"/>
    <property type="project" value="UniProtKB-UniRule"/>
</dbReference>
<dbReference type="GO" id="GO:0010420">
    <property type="term" value="F:polyprenyldihydroxybenzoate methyltransferase activity"/>
    <property type="evidence" value="ECO:0007669"/>
    <property type="project" value="InterPro"/>
</dbReference>
<dbReference type="GO" id="GO:0032259">
    <property type="term" value="P:methylation"/>
    <property type="evidence" value="ECO:0007669"/>
    <property type="project" value="UniProtKB-KW"/>
</dbReference>
<dbReference type="CDD" id="cd02440">
    <property type="entry name" value="AdoMet_MTases"/>
    <property type="match status" value="1"/>
</dbReference>
<dbReference type="Gene3D" id="3.40.50.150">
    <property type="entry name" value="Vaccinia Virus protein VP39"/>
    <property type="match status" value="1"/>
</dbReference>
<dbReference type="HAMAP" id="MF_00472">
    <property type="entry name" value="UbiG"/>
    <property type="match status" value="1"/>
</dbReference>
<dbReference type="InterPro" id="IPR029063">
    <property type="entry name" value="SAM-dependent_MTases_sf"/>
</dbReference>
<dbReference type="InterPro" id="IPR010233">
    <property type="entry name" value="UbiG_MeTrfase"/>
</dbReference>
<dbReference type="NCBIfam" id="TIGR01983">
    <property type="entry name" value="UbiG"/>
    <property type="match status" value="1"/>
</dbReference>
<dbReference type="PANTHER" id="PTHR43464">
    <property type="entry name" value="METHYLTRANSFERASE"/>
    <property type="match status" value="1"/>
</dbReference>
<dbReference type="PANTHER" id="PTHR43464:SF19">
    <property type="entry name" value="UBIQUINONE BIOSYNTHESIS O-METHYLTRANSFERASE, MITOCHONDRIAL"/>
    <property type="match status" value="1"/>
</dbReference>
<dbReference type="Pfam" id="PF13489">
    <property type="entry name" value="Methyltransf_23"/>
    <property type="match status" value="1"/>
</dbReference>
<dbReference type="SUPFAM" id="SSF53335">
    <property type="entry name" value="S-adenosyl-L-methionine-dependent methyltransferases"/>
    <property type="match status" value="1"/>
</dbReference>
<protein>
    <recommendedName>
        <fullName evidence="1">Ubiquinone biosynthesis O-methyltransferase</fullName>
    </recommendedName>
    <alternativeName>
        <fullName evidence="1">2-polyprenyl-6-hydroxyphenol methylase</fullName>
        <ecNumber evidence="1">2.1.1.222</ecNumber>
    </alternativeName>
    <alternativeName>
        <fullName evidence="1">3-demethylubiquinone 3-O-methyltransferase</fullName>
        <ecNumber evidence="1">2.1.1.64</ecNumber>
    </alternativeName>
</protein>
<proteinExistence type="inferred from homology"/>
<gene>
    <name evidence="1" type="primary">ubiG</name>
    <name type="ordered locus">RP622</name>
</gene>
<sequence length="252" mass="28772">MSSINKKELEKFEKISHNWWNKNGEFGILHRINHIRIEYIIEKIKSNYNDISKLQILDVGCGGGLIAAPLALQGFNVTAIDALKSNVETATIYAQKNGLKINYLQATIEELENDKLYDVVICLEVIEHVANIQQFILNLVQHIKPNGIAIISTMNRTKKAYLFGIIVAEYILGWVPKNTHDYSKFVKPSEIYEILTDTNIEIKELKGLVFNLAKNEWKLSNDIDVNYFMCLEKKMNSLSSTCNGIPQLKRVI</sequence>